<sequence>MSTALAKPQMRGLLARRLRFHIVGAFMVSLGFATFYKFAVAEKRKKAYADFYRNYDSMKDFEEMRKAGIFQSAK</sequence>
<accession>P04038</accession>
<accession>A0JNM4</accession>
<evidence type="ECO:0000269" key="1">
    <source>
    </source>
</evidence>
<evidence type="ECO:0000269" key="2">
    <source>
    </source>
</evidence>
<evidence type="ECO:0000269" key="3">
    <source>
    </source>
</evidence>
<evidence type="ECO:0000269" key="4">
    <source>
    </source>
</evidence>
<evidence type="ECO:0000269" key="5">
    <source>
    </source>
</evidence>
<evidence type="ECO:0000269" key="6">
    <source>
    </source>
</evidence>
<evidence type="ECO:0000269" key="7">
    <source>
    </source>
</evidence>
<evidence type="ECO:0000305" key="8"/>
<evidence type="ECO:0000305" key="9">
    <source>
    </source>
</evidence>
<evidence type="ECO:0007829" key="10">
    <source>
        <dbReference type="PDB" id="7COH"/>
    </source>
</evidence>
<comment type="function">
    <text evidence="2">Component of the cytochrome c oxidase, the last enzyme in the mitochondrial electron transport chain which drives oxidative phosphorylation. The respiratory chain contains 3 multisubunit complexes succinate dehydrogenase (complex II, CII), ubiquinol-cytochrome c oxidoreductase (cytochrome b-c1 complex, complex III, CIII) and cytochrome c oxidase (complex IV, CIV), that cooperate to transfer electrons derived from NADH and succinate to molecular oxygen, creating an electrochemical gradient over the inner membrane that drives transmembrane transport and the ATP synthase. Cytochrome c oxidase is the component of the respiratory chain that catalyzes the reduction of oxygen to water. Electrons originating from reduced cytochrome c in the intermembrane space (IMS) are transferred via the dinuclear copper A center (CU(A)) of subunit 2 and heme A of subunit 1 to the active site in subunit 1, a binuclear center (BNC) formed by heme A3 and copper B (CU(B)). The BNC reduces molecular oxygen to 2 water molecules using 4 electrons from cytochrome c in the IMS and 4 protons from the mitochondrial matrix.</text>
</comment>
<comment type="pathway">
    <text evidence="9">Energy metabolism; oxidative phosphorylation.</text>
</comment>
<comment type="subunit">
    <text evidence="1 3 7">Component of the cytochrome c oxidase (complex IV, CIV), a multisubunit enzyme composed of 14 subunits. The complex is composed of a catalytic core of 3 subunits MT-CO1, MT-CO2 and MT-CO3, encoded in the mitochondrial DNA, and 11 supernumerary subunits COX4I1 (or COX4I2), COX5A, COX5B, COX6A2 (or COX6A1), COX6B1 (or COX6B2), COX6C, COX7A1 (or COX7A2), COX7B, COX7C, COX8B and NDUFA4, which are encoded in the nuclear genome (PubMed:8638158). The complex exists as a monomer or a dimer and forms supercomplexes (SCs) in the inner mitochondrial membrane with NADH-ubiquinone oxidoreductase (complex I, CI) and ubiquinol-cytochrome c oxidoreductase (cytochrome b-c1 complex, complex III, CIII), resulting in different assemblies (supercomplex SCI(1)III(2)IV(1) and megacomplex MCI(2)III(2)IV(2)) (PubMed:26698328, PubMed:27830641).</text>
</comment>
<comment type="subcellular location">
    <subcellularLocation>
        <location evidence="2 6">Mitochondrion inner membrane</location>
        <topology evidence="2 6">Single-pass membrane protein</topology>
    </subcellularLocation>
</comment>
<comment type="similarity">
    <text evidence="8">Belongs to the cytochrome c oxidase subunit 6c family.</text>
</comment>
<reference key="1">
    <citation type="submission" date="2006-10" db="EMBL/GenBank/DDBJ databases">
        <authorList>
            <consortium name="NIH - Mammalian Gene Collection (MGC) project"/>
        </authorList>
    </citation>
    <scope>NUCLEOTIDE SEQUENCE [LARGE SCALE MRNA]</scope>
    <source>
        <strain>Hereford</strain>
        <tissue>Fetal medulla</tissue>
    </source>
</reference>
<reference key="2">
    <citation type="journal article" date="1985" name="Biol. Chem. Hoppe-Seyler">
        <title>Studies on cytochrome c oxidase, XI. The amino-acid sequence of bovine heart polypeptide VIc.</title>
        <authorList>
            <person name="Erdweg M."/>
            <person name="Buse G."/>
        </authorList>
    </citation>
    <scope>PROTEIN SEQUENCE OF 2-74</scope>
    <source>
        <tissue>Liver</tissue>
    </source>
</reference>
<reference key="3">
    <citation type="journal article" date="1988" name="Biochemistry">
        <title>Tissue-specific differences between heart and liver cytochrome c oxidase.</title>
        <authorList>
            <person name="Yanamura W."/>
            <person name="Zhang Y.-Z."/>
            <person name="Takamiya S."/>
            <person name="Capaldi R.A."/>
        </authorList>
    </citation>
    <scope>PROTEIN SEQUENCE OF 2-21</scope>
    <source>
        <tissue>Liver</tissue>
    </source>
</reference>
<reference key="4">
    <citation type="journal article" date="2016" name="J. Biol. Chem.">
        <title>Purification of active respiratory supercomplex from bovine heart mitochondria enables functional studies.</title>
        <authorList>
            <person name="Shinzawa-Itoh K."/>
            <person name="Shimomura H."/>
            <person name="Yanagisawa S."/>
            <person name="Shimada S."/>
            <person name="Takahashi R."/>
            <person name="Oosaki M."/>
            <person name="Ogura T."/>
            <person name="Tsukihara T."/>
        </authorList>
    </citation>
    <scope>SUBUNIT</scope>
</reference>
<reference key="5">
    <citation type="journal article" date="1996" name="Science">
        <title>The whole structure of the 13-subunit oxidized cytochrome c oxidase at 2.8 A.</title>
        <authorList>
            <person name="Tsukihara T."/>
            <person name="Aoyama H."/>
            <person name="Yamashita E."/>
            <person name="Tomizaki T."/>
            <person name="Yamaguchi H."/>
            <person name="Shinzawa-Itoh K."/>
            <person name="Nakashima R."/>
            <person name="Yaono R."/>
            <person name="Yoshikawa S."/>
        </authorList>
    </citation>
    <scope>X-RAY CRYSTALLOGRAPHY (2.8 ANGSTROMS)</scope>
</reference>
<reference key="6">
    <citation type="journal article" date="1999" name="Acta Crystallogr. D">
        <title>Structure analysis of bovine heart cytochrome c oxidase at 2.8 A resolution.</title>
        <authorList>
            <person name="Tomizaki T."/>
            <person name="Yamashita E."/>
            <person name="Yamaguchi H."/>
            <person name="Aoyama H."/>
            <person name="Tsukihara T."/>
            <person name="Shinzawa-Itoh K."/>
            <person name="Nakashima R."/>
            <person name="Yaono R."/>
            <person name="Yoshikawa S."/>
        </authorList>
    </citation>
    <scope>X-RAY CRYSTALLOGRAPHY (2.8 ANGSTROMS)</scope>
    <source>
        <tissue>Heart</tissue>
    </source>
</reference>
<reference key="7">
    <citation type="journal article" date="2000" name="Acta Crystallogr. D">
        <title>X-ray structure of azide-bound fully oxidized cytochrome c oxidase from bovine heart at 2.9 A resolution.</title>
        <authorList>
            <person name="Fei M.J."/>
            <person name="Yamashita E."/>
            <person name="Inoue N."/>
            <person name="Yao M."/>
            <person name="Yamaguchi H."/>
            <person name="Tsukihara T."/>
            <person name="Shinzawa-Itoh K."/>
            <person name="Nakashima R."/>
            <person name="Yoshikawa S."/>
        </authorList>
    </citation>
    <scope>X-RAY CRYSTALLOGRAPHY (2.9 ANGSTROMS)</scope>
    <source>
        <tissue>Heart</tissue>
    </source>
</reference>
<reference key="8">
    <citation type="journal article" date="2010" name="Proc. Natl. Acad. Sci. U.S.A.">
        <title>Bovine cytochrome c oxidase structures enable O2 reduction with minimization of reactive oxygens and provide a proton-pumping gate.</title>
        <authorList>
            <person name="Muramoto K."/>
            <person name="Ohta K."/>
            <person name="Shinzawa-Itoh K."/>
            <person name="Kanda K."/>
            <person name="Taniguchi M."/>
            <person name="Nabekura H."/>
            <person name="Yamashita E."/>
            <person name="Tsukihara T."/>
            <person name="Yoshikawa S."/>
        </authorList>
    </citation>
    <scope>X-RAY CRYSTALLOGRAPHY (1.80 ANGSTROMS)</scope>
</reference>
<reference key="9">
    <citation type="journal article" date="2016" name="Elife">
        <title>Functional asymmetry and electron flow in the bovine respirasome.</title>
        <authorList>
            <person name="Sousa J.S."/>
            <person name="Mills D.J."/>
            <person name="Vonck J."/>
            <person name="Kuehlbrandt W."/>
        </authorList>
    </citation>
    <scope>STRUCTURE BY ELECTRON MICROSCOPY (9.10 ANGSTROMS)</scope>
</reference>
<reference key="10">
    <citation type="journal article" date="2016" name="J. Biol. Chem.">
        <title>The Mg2+-containing water cluster of mammalian cytochrome c oxidase collects four pumping proton equivalents in each catalytic cycle.</title>
        <authorList>
            <person name="Yano N."/>
            <person name="Muramoto K."/>
            <person name="Shimada A."/>
            <person name="Takemura S."/>
            <person name="Baba J."/>
            <person name="Fujisawa H."/>
            <person name="Mochizuki M."/>
            <person name="Shinzawa-Itoh K."/>
            <person name="Yamashita E."/>
            <person name="Tsukihara T."/>
            <person name="Yoshikawa S."/>
        </authorList>
    </citation>
    <scope>X-RAY CRYSTALLOGRAPHY (1.50 ANGSTROMS)</scope>
</reference>
<reference key="11">
    <citation type="journal article" date="2019" name="Proc. Natl. Acad. Sci. U.S.A.">
        <title>Monomeric structure of an active form of bovine cytochrome c oxidase.</title>
        <authorList>
            <person name="Shinzawa-Itoh K."/>
            <person name="Sugimura T."/>
            <person name="Misaki T."/>
            <person name="Tadehara Y."/>
            <person name="Yamamoto S."/>
            <person name="Hanada M."/>
            <person name="Yano N."/>
            <person name="Nakagawa T."/>
            <person name="Uene S."/>
            <person name="Yamada T."/>
            <person name="Aoyama H."/>
            <person name="Yamashita E."/>
            <person name="Tsukihara T."/>
            <person name="Yoshikawa S."/>
            <person name="Muramoto K."/>
        </authorList>
    </citation>
    <scope>X-RAY CRYSTALLOGRAPHY (1.85 ANGSTROMS)</scope>
</reference>
<protein>
    <recommendedName>
        <fullName>Cytochrome c oxidase subunit 6C</fullName>
    </recommendedName>
    <alternativeName>
        <fullName>Cytochrome c oxidase polypeptide VIc</fullName>
    </alternativeName>
    <alternativeName>
        <fullName>Cytochrome c oxidase subunit STA</fullName>
    </alternativeName>
</protein>
<name>COX6C_BOVIN</name>
<gene>
    <name type="primary">COX6C</name>
</gene>
<feature type="initiator methionine" description="Removed" evidence="4 5">
    <location>
        <position position="1"/>
    </location>
</feature>
<feature type="chain" id="PRO_0000191301" description="Cytochrome c oxidase subunit 6C">
    <location>
        <begin position="2"/>
        <end position="74"/>
    </location>
</feature>
<feature type="topological domain" description="Mitochondrial matrix" evidence="2">
    <location>
        <begin position="2"/>
        <end position="12"/>
    </location>
</feature>
<feature type="transmembrane region" description="Helical" evidence="2">
    <location>
        <begin position="13"/>
        <end position="53"/>
    </location>
</feature>
<feature type="topological domain" description="Mitochondrial intermembrane" evidence="2">
    <location>
        <begin position="54"/>
        <end position="74"/>
    </location>
</feature>
<feature type="helix" evidence="10">
    <location>
        <begin position="13"/>
        <end position="39"/>
    </location>
</feature>
<feature type="helix" evidence="10">
    <location>
        <begin position="41"/>
        <end position="53"/>
    </location>
</feature>
<feature type="helix" evidence="10">
    <location>
        <begin position="57"/>
        <end position="67"/>
    </location>
</feature>
<proteinExistence type="evidence at protein level"/>
<keyword id="KW-0002">3D-structure</keyword>
<keyword id="KW-0903">Direct protein sequencing</keyword>
<keyword id="KW-0472">Membrane</keyword>
<keyword id="KW-0496">Mitochondrion</keyword>
<keyword id="KW-0999">Mitochondrion inner membrane</keyword>
<keyword id="KW-1185">Reference proteome</keyword>
<keyword id="KW-0812">Transmembrane</keyword>
<keyword id="KW-1133">Transmembrane helix</keyword>
<dbReference type="EMBL" id="BC126788">
    <property type="protein sequence ID" value="AAI26789.1"/>
    <property type="molecule type" value="mRNA"/>
</dbReference>
<dbReference type="PIR" id="A00496">
    <property type="entry name" value="OGBO6C"/>
</dbReference>
<dbReference type="RefSeq" id="NP_001231040.1">
    <property type="nucleotide sequence ID" value="NM_001244111.1"/>
</dbReference>
<dbReference type="PDB" id="1OCC">
    <property type="method" value="X-ray"/>
    <property type="resolution" value="2.80 A"/>
    <property type="chains" value="I/V=2-74"/>
</dbReference>
<dbReference type="PDB" id="1OCO">
    <property type="method" value="X-ray"/>
    <property type="resolution" value="2.80 A"/>
    <property type="chains" value="I/V=2-74"/>
</dbReference>
<dbReference type="PDB" id="1OCR">
    <property type="method" value="X-ray"/>
    <property type="resolution" value="2.35 A"/>
    <property type="chains" value="I/V=2-74"/>
</dbReference>
<dbReference type="PDB" id="1OCZ">
    <property type="method" value="X-ray"/>
    <property type="resolution" value="2.90 A"/>
    <property type="chains" value="I/V=2-74"/>
</dbReference>
<dbReference type="PDB" id="1V54">
    <property type="method" value="X-ray"/>
    <property type="resolution" value="1.80 A"/>
    <property type="chains" value="I/V=2-74"/>
</dbReference>
<dbReference type="PDB" id="1V55">
    <property type="method" value="X-ray"/>
    <property type="resolution" value="1.90 A"/>
    <property type="chains" value="I/V=2-74"/>
</dbReference>
<dbReference type="PDB" id="2DYR">
    <property type="method" value="X-ray"/>
    <property type="resolution" value="1.80 A"/>
    <property type="chains" value="I/V=2-74"/>
</dbReference>
<dbReference type="PDB" id="2DYS">
    <property type="method" value="X-ray"/>
    <property type="resolution" value="2.20 A"/>
    <property type="chains" value="I/V=2-74"/>
</dbReference>
<dbReference type="PDB" id="2EIJ">
    <property type="method" value="X-ray"/>
    <property type="resolution" value="1.90 A"/>
    <property type="chains" value="I/V=2-74"/>
</dbReference>
<dbReference type="PDB" id="2EIK">
    <property type="method" value="X-ray"/>
    <property type="resolution" value="2.10 A"/>
    <property type="chains" value="I/V=2-74"/>
</dbReference>
<dbReference type="PDB" id="2EIL">
    <property type="method" value="X-ray"/>
    <property type="resolution" value="2.10 A"/>
    <property type="chains" value="I/V=2-74"/>
</dbReference>
<dbReference type="PDB" id="2EIM">
    <property type="method" value="X-ray"/>
    <property type="resolution" value="2.60 A"/>
    <property type="chains" value="I/V=2-74"/>
</dbReference>
<dbReference type="PDB" id="2EIN">
    <property type="method" value="X-ray"/>
    <property type="resolution" value="2.70 A"/>
    <property type="chains" value="I/V=2-74"/>
</dbReference>
<dbReference type="PDB" id="2OCC">
    <property type="method" value="X-ray"/>
    <property type="resolution" value="2.30 A"/>
    <property type="chains" value="I/V=2-74"/>
</dbReference>
<dbReference type="PDB" id="2Y69">
    <property type="method" value="X-ray"/>
    <property type="resolution" value="1.95 A"/>
    <property type="chains" value="I/V=1-74"/>
</dbReference>
<dbReference type="PDB" id="2YBB">
    <property type="method" value="EM"/>
    <property type="resolution" value="19.00 A"/>
    <property type="chains" value="T=2-74"/>
</dbReference>
<dbReference type="PDB" id="2ZXW">
    <property type="method" value="X-ray"/>
    <property type="resolution" value="2.50 A"/>
    <property type="chains" value="I/V=2-74"/>
</dbReference>
<dbReference type="PDB" id="3ABK">
    <property type="method" value="X-ray"/>
    <property type="resolution" value="2.00 A"/>
    <property type="chains" value="I/V=2-74"/>
</dbReference>
<dbReference type="PDB" id="3ABL">
    <property type="method" value="X-ray"/>
    <property type="resolution" value="2.10 A"/>
    <property type="chains" value="I/V=2-74"/>
</dbReference>
<dbReference type="PDB" id="3ABM">
    <property type="method" value="X-ray"/>
    <property type="resolution" value="1.95 A"/>
    <property type="chains" value="I/V=2-74"/>
</dbReference>
<dbReference type="PDB" id="3AG1">
    <property type="method" value="X-ray"/>
    <property type="resolution" value="2.20 A"/>
    <property type="chains" value="I/V=2-74"/>
</dbReference>
<dbReference type="PDB" id="3AG2">
    <property type="method" value="X-ray"/>
    <property type="resolution" value="1.80 A"/>
    <property type="chains" value="I/V=2-74"/>
</dbReference>
<dbReference type="PDB" id="3AG3">
    <property type="method" value="X-ray"/>
    <property type="resolution" value="1.80 A"/>
    <property type="chains" value="I/V=2-74"/>
</dbReference>
<dbReference type="PDB" id="3AG4">
    <property type="method" value="X-ray"/>
    <property type="resolution" value="2.05 A"/>
    <property type="chains" value="I/V=2-74"/>
</dbReference>
<dbReference type="PDB" id="3ASN">
    <property type="method" value="X-ray"/>
    <property type="resolution" value="3.00 A"/>
    <property type="chains" value="I/V=2-74"/>
</dbReference>
<dbReference type="PDB" id="3ASO">
    <property type="method" value="X-ray"/>
    <property type="resolution" value="2.30 A"/>
    <property type="chains" value="I/V=2-74"/>
</dbReference>
<dbReference type="PDB" id="3WG7">
    <property type="method" value="X-ray"/>
    <property type="resolution" value="1.90 A"/>
    <property type="chains" value="I/V=2-74"/>
</dbReference>
<dbReference type="PDB" id="3X2Q">
    <property type="method" value="X-ray"/>
    <property type="resolution" value="2.00 A"/>
    <property type="chains" value="I/V=2-74"/>
</dbReference>
<dbReference type="PDB" id="5B1A">
    <property type="method" value="X-ray"/>
    <property type="resolution" value="1.50 A"/>
    <property type="chains" value="I/V=2-74"/>
</dbReference>
<dbReference type="PDB" id="5B1B">
    <property type="method" value="X-ray"/>
    <property type="resolution" value="1.60 A"/>
    <property type="chains" value="I/V=2-74"/>
</dbReference>
<dbReference type="PDB" id="5B3S">
    <property type="method" value="X-ray"/>
    <property type="resolution" value="1.68 A"/>
    <property type="chains" value="I/V=3-74"/>
</dbReference>
<dbReference type="PDB" id="5GPN">
    <property type="method" value="EM"/>
    <property type="resolution" value="5.40 A"/>
    <property type="chains" value="6=2-74"/>
</dbReference>
<dbReference type="PDB" id="5IY5">
    <property type="method" value="X-ray"/>
    <property type="resolution" value="2.00 A"/>
    <property type="chains" value="I/V=2-74"/>
</dbReference>
<dbReference type="PDB" id="5LUF">
    <property type="method" value="EM"/>
    <property type="resolution" value="9.10 A"/>
    <property type="chains" value="6=2-74"/>
</dbReference>
<dbReference type="PDB" id="5W97">
    <property type="method" value="X-ray"/>
    <property type="resolution" value="2.30 A"/>
    <property type="chains" value="I/i=2-74"/>
</dbReference>
<dbReference type="PDB" id="5WAU">
    <property type="method" value="X-ray"/>
    <property type="resolution" value="1.95 A"/>
    <property type="chains" value="I/i=2-74"/>
</dbReference>
<dbReference type="PDB" id="5X19">
    <property type="method" value="X-ray"/>
    <property type="resolution" value="2.20 A"/>
    <property type="chains" value="I/V=2-74"/>
</dbReference>
<dbReference type="PDB" id="5X1B">
    <property type="method" value="X-ray"/>
    <property type="resolution" value="2.40 A"/>
    <property type="chains" value="I/V=2-74"/>
</dbReference>
<dbReference type="PDB" id="5X1F">
    <property type="method" value="X-ray"/>
    <property type="resolution" value="2.20 A"/>
    <property type="chains" value="I/V=2-74"/>
</dbReference>
<dbReference type="PDB" id="5XDQ">
    <property type="method" value="X-ray"/>
    <property type="resolution" value="1.77 A"/>
    <property type="chains" value="I/V=2-74"/>
</dbReference>
<dbReference type="PDB" id="5XDX">
    <property type="method" value="X-ray"/>
    <property type="resolution" value="1.99 A"/>
    <property type="chains" value="I/V=2-74"/>
</dbReference>
<dbReference type="PDB" id="5XTH">
    <property type="method" value="EM"/>
    <property type="resolution" value="3.90 A"/>
    <property type="chains" value="5=2-74"/>
</dbReference>
<dbReference type="PDB" id="5XTI">
    <property type="method" value="EM"/>
    <property type="resolution" value="17.40 A"/>
    <property type="chains" value="5/B5=2-74"/>
</dbReference>
<dbReference type="PDB" id="5Z84">
    <property type="method" value="X-ray"/>
    <property type="resolution" value="1.85 A"/>
    <property type="chains" value="I/V=2-74"/>
</dbReference>
<dbReference type="PDB" id="5Z85">
    <property type="method" value="X-ray"/>
    <property type="resolution" value="1.85 A"/>
    <property type="chains" value="I/V=2-74"/>
</dbReference>
<dbReference type="PDB" id="5Z86">
    <property type="method" value="X-ray"/>
    <property type="resolution" value="1.85 A"/>
    <property type="chains" value="I/V=2-74"/>
</dbReference>
<dbReference type="PDB" id="5ZCO">
    <property type="method" value="X-ray"/>
    <property type="resolution" value="1.90 A"/>
    <property type="chains" value="I/V=2-74"/>
</dbReference>
<dbReference type="PDB" id="5ZCP">
    <property type="method" value="X-ray"/>
    <property type="resolution" value="1.65 A"/>
    <property type="chains" value="I/V=2-74"/>
</dbReference>
<dbReference type="PDB" id="5ZCQ">
    <property type="method" value="X-ray"/>
    <property type="resolution" value="1.65 A"/>
    <property type="chains" value="I/V=2-74"/>
</dbReference>
<dbReference type="PDB" id="6J8M">
    <property type="method" value="X-ray"/>
    <property type="resolution" value="1.90 A"/>
    <property type="chains" value="I/V=2-74"/>
</dbReference>
<dbReference type="PDB" id="6JUW">
    <property type="method" value="X-ray"/>
    <property type="resolution" value="1.80 A"/>
    <property type="chains" value="I/V=2-74"/>
</dbReference>
<dbReference type="PDB" id="6JY3">
    <property type="method" value="X-ray"/>
    <property type="resolution" value="1.85 A"/>
    <property type="chains" value="I=2-74"/>
</dbReference>
<dbReference type="PDB" id="6JY4">
    <property type="method" value="X-ray"/>
    <property type="resolution" value="1.95 A"/>
    <property type="chains" value="I=2-74"/>
</dbReference>
<dbReference type="PDB" id="6NKN">
    <property type="method" value="X-ray"/>
    <property type="resolution" value="2.50 A"/>
    <property type="chains" value="I/V=2-74"/>
</dbReference>
<dbReference type="PDB" id="6NMF">
    <property type="method" value="X-ray"/>
    <property type="resolution" value="2.80 A"/>
    <property type="chains" value="I/V=2-74"/>
</dbReference>
<dbReference type="PDB" id="6NMP">
    <property type="method" value="X-ray"/>
    <property type="resolution" value="2.90 A"/>
    <property type="chains" value="I/V=2-74"/>
</dbReference>
<dbReference type="PDB" id="7COH">
    <property type="method" value="X-ray"/>
    <property type="resolution" value="1.30 A"/>
    <property type="chains" value="I/V=2-74"/>
</dbReference>
<dbReference type="PDB" id="7CP5">
    <property type="method" value="X-ray"/>
    <property type="resolution" value="1.76 A"/>
    <property type="chains" value="I/V=2-74"/>
</dbReference>
<dbReference type="PDB" id="7D5W">
    <property type="method" value="X-ray"/>
    <property type="resolution" value="1.84 A"/>
    <property type="chains" value="I/V=2-74"/>
</dbReference>
<dbReference type="PDB" id="7D5X">
    <property type="method" value="X-ray"/>
    <property type="resolution" value="1.74 A"/>
    <property type="chains" value="I/V=2-74"/>
</dbReference>
<dbReference type="PDB" id="7DGQ">
    <property type="method" value="EM"/>
    <property type="resolution" value="5.00 A"/>
    <property type="chains" value="C2=1-74"/>
</dbReference>
<dbReference type="PDB" id="7DGR">
    <property type="method" value="EM"/>
    <property type="resolution" value="4.60 A"/>
    <property type="chains" value="B4=1-74"/>
</dbReference>
<dbReference type="PDB" id="7DGS">
    <property type="method" value="EM"/>
    <property type="resolution" value="7.80 A"/>
    <property type="chains" value="B6=1-74"/>
</dbReference>
<dbReference type="PDB" id="7DKF">
    <property type="method" value="EM"/>
    <property type="resolution" value="8.30 A"/>
    <property type="chains" value="I3=1-74"/>
</dbReference>
<dbReference type="PDB" id="7EV7">
    <property type="method" value="X-ray"/>
    <property type="resolution" value="1.70 A"/>
    <property type="chains" value="I/V=2-74"/>
</dbReference>
<dbReference type="PDB" id="7THU">
    <property type="method" value="X-ray"/>
    <property type="resolution" value="1.93 A"/>
    <property type="chains" value="IaI/VaV=2-74"/>
</dbReference>
<dbReference type="PDB" id="7TIE">
    <property type="method" value="X-ray"/>
    <property type="resolution" value="1.90 A"/>
    <property type="chains" value="IaI/VaV=2-74"/>
</dbReference>
<dbReference type="PDB" id="7TIH">
    <property type="method" value="X-ray"/>
    <property type="resolution" value="2.35 A"/>
    <property type="chains" value="IaI/VaV=2-74"/>
</dbReference>
<dbReference type="PDB" id="7TII">
    <property type="method" value="X-ray"/>
    <property type="resolution" value="2.45 A"/>
    <property type="chains" value="IaI/VaV=2-74"/>
</dbReference>
<dbReference type="PDB" id="7VUW">
    <property type="method" value="X-ray"/>
    <property type="resolution" value="1.60 A"/>
    <property type="chains" value="I/V=2-74"/>
</dbReference>
<dbReference type="PDB" id="7VVR">
    <property type="method" value="X-ray"/>
    <property type="resolution" value="1.65 A"/>
    <property type="chains" value="I/V=2-74"/>
</dbReference>
<dbReference type="PDB" id="7W3E">
    <property type="method" value="X-ray"/>
    <property type="resolution" value="1.45 A"/>
    <property type="chains" value="I/V=2-74"/>
</dbReference>
<dbReference type="PDB" id="7XMA">
    <property type="method" value="X-ray"/>
    <property type="resolution" value="2.20 A"/>
    <property type="chains" value="I/V=2-74"/>
</dbReference>
<dbReference type="PDB" id="7XMB">
    <property type="method" value="X-ray"/>
    <property type="resolution" value="2.20 A"/>
    <property type="chains" value="I/V=2-74"/>
</dbReference>
<dbReference type="PDB" id="7Y44">
    <property type="method" value="X-ray"/>
    <property type="resolution" value="1.90 A"/>
    <property type="chains" value="I/V=2-74"/>
</dbReference>
<dbReference type="PDB" id="7YPY">
    <property type="method" value="X-ray"/>
    <property type="resolution" value="1.50 A"/>
    <property type="chains" value="I/V=2-74"/>
</dbReference>
<dbReference type="PDB" id="8D4T">
    <property type="method" value="EM"/>
    <property type="resolution" value="3.10 A"/>
    <property type="chains" value="V=5-74"/>
</dbReference>
<dbReference type="PDB" id="8GBT">
    <property type="method" value="X-ray"/>
    <property type="resolution" value="2.80 A"/>
    <property type="chains" value="I/V=2-74"/>
</dbReference>
<dbReference type="PDB" id="8GCQ">
    <property type="method" value="X-ray"/>
    <property type="resolution" value="2.38 A"/>
    <property type="chains" value="I/V=2-74"/>
</dbReference>
<dbReference type="PDB" id="8GVM">
    <property type="method" value="X-ray"/>
    <property type="resolution" value="1.85 A"/>
    <property type="chains" value="I/V=2-74"/>
</dbReference>
<dbReference type="PDB" id="8H8R">
    <property type="method" value="X-ray"/>
    <property type="resolution" value="1.70 A"/>
    <property type="chains" value="I/V=2-74"/>
</dbReference>
<dbReference type="PDB" id="8H8S">
    <property type="method" value="X-ray"/>
    <property type="resolution" value="1.70 A"/>
    <property type="chains" value="I/V=2-74"/>
</dbReference>
<dbReference type="PDB" id="8IJN">
    <property type="method" value="X-ray"/>
    <property type="resolution" value="1.80 A"/>
    <property type="chains" value="I/V=2-74"/>
</dbReference>
<dbReference type="PDBsum" id="1OCC"/>
<dbReference type="PDBsum" id="1OCO"/>
<dbReference type="PDBsum" id="1OCR"/>
<dbReference type="PDBsum" id="1OCZ"/>
<dbReference type="PDBsum" id="1V54"/>
<dbReference type="PDBsum" id="1V55"/>
<dbReference type="PDBsum" id="2DYR"/>
<dbReference type="PDBsum" id="2DYS"/>
<dbReference type="PDBsum" id="2EIJ"/>
<dbReference type="PDBsum" id="2EIK"/>
<dbReference type="PDBsum" id="2EIL"/>
<dbReference type="PDBsum" id="2EIM"/>
<dbReference type="PDBsum" id="2EIN"/>
<dbReference type="PDBsum" id="2OCC"/>
<dbReference type="PDBsum" id="2Y69"/>
<dbReference type="PDBsum" id="2YBB"/>
<dbReference type="PDBsum" id="2ZXW"/>
<dbReference type="PDBsum" id="3ABK"/>
<dbReference type="PDBsum" id="3ABL"/>
<dbReference type="PDBsum" id="3ABM"/>
<dbReference type="PDBsum" id="3AG1"/>
<dbReference type="PDBsum" id="3AG2"/>
<dbReference type="PDBsum" id="3AG3"/>
<dbReference type="PDBsum" id="3AG4"/>
<dbReference type="PDBsum" id="3ASN"/>
<dbReference type="PDBsum" id="3ASO"/>
<dbReference type="PDBsum" id="3WG7"/>
<dbReference type="PDBsum" id="3X2Q"/>
<dbReference type="PDBsum" id="5B1A"/>
<dbReference type="PDBsum" id="5B1B"/>
<dbReference type="PDBsum" id="5B3S"/>
<dbReference type="PDBsum" id="5GPN"/>
<dbReference type="PDBsum" id="5IY5"/>
<dbReference type="PDBsum" id="5LUF"/>
<dbReference type="PDBsum" id="5W97"/>
<dbReference type="PDBsum" id="5WAU"/>
<dbReference type="PDBsum" id="5X19"/>
<dbReference type="PDBsum" id="5X1B"/>
<dbReference type="PDBsum" id="5X1F"/>
<dbReference type="PDBsum" id="5XDQ"/>
<dbReference type="PDBsum" id="5XDX"/>
<dbReference type="PDBsum" id="5XTH"/>
<dbReference type="PDBsum" id="5XTI"/>
<dbReference type="PDBsum" id="5Z84"/>
<dbReference type="PDBsum" id="5Z85"/>
<dbReference type="PDBsum" id="5Z86"/>
<dbReference type="PDBsum" id="5ZCO"/>
<dbReference type="PDBsum" id="5ZCP"/>
<dbReference type="PDBsum" id="5ZCQ"/>
<dbReference type="PDBsum" id="6J8M"/>
<dbReference type="PDBsum" id="6JUW"/>
<dbReference type="PDBsum" id="6JY3"/>
<dbReference type="PDBsum" id="6JY4"/>
<dbReference type="PDBsum" id="6NKN"/>
<dbReference type="PDBsum" id="6NMF"/>
<dbReference type="PDBsum" id="6NMP"/>
<dbReference type="PDBsum" id="7COH"/>
<dbReference type="PDBsum" id="7CP5"/>
<dbReference type="PDBsum" id="7D5W"/>
<dbReference type="PDBsum" id="7D5X"/>
<dbReference type="PDBsum" id="7DGQ"/>
<dbReference type="PDBsum" id="7DGR"/>
<dbReference type="PDBsum" id="7DGS"/>
<dbReference type="PDBsum" id="7DKF"/>
<dbReference type="PDBsum" id="7EV7"/>
<dbReference type="PDBsum" id="7THU"/>
<dbReference type="PDBsum" id="7TIE"/>
<dbReference type="PDBsum" id="7TIH"/>
<dbReference type="PDBsum" id="7TII"/>
<dbReference type="PDBsum" id="7VUW"/>
<dbReference type="PDBsum" id="7VVR"/>
<dbReference type="PDBsum" id="7W3E"/>
<dbReference type="PDBsum" id="7XMA"/>
<dbReference type="PDBsum" id="7XMB"/>
<dbReference type="PDBsum" id="7Y44"/>
<dbReference type="PDBsum" id="7YPY"/>
<dbReference type="PDBsum" id="8D4T"/>
<dbReference type="PDBsum" id="8GBT"/>
<dbReference type="PDBsum" id="8GCQ"/>
<dbReference type="PDBsum" id="8GVM"/>
<dbReference type="PDBsum" id="8H8R"/>
<dbReference type="PDBsum" id="8H8S"/>
<dbReference type="PDBsum" id="8IJN"/>
<dbReference type="EMDB" id="EMD-27196"/>
<dbReference type="EMDB" id="EMD-30673"/>
<dbReference type="EMDB" id="EMD-30674"/>
<dbReference type="EMDB" id="EMD-30675"/>
<dbReference type="EMDB" id="EMD-30706"/>
<dbReference type="EMDB" id="EMD-4107"/>
<dbReference type="EMDB" id="EMD-9534"/>
<dbReference type="SMR" id="P04038"/>
<dbReference type="CORUM" id="P04038"/>
<dbReference type="DIP" id="DIP-38980N"/>
<dbReference type="FunCoup" id="P04038">
    <property type="interactions" value="1072"/>
</dbReference>
<dbReference type="IntAct" id="P04038">
    <property type="interactions" value="3"/>
</dbReference>
<dbReference type="STRING" id="9913.ENSBTAP00000067188"/>
<dbReference type="PaxDb" id="9913-ENSBTAP00000018778"/>
<dbReference type="Ensembl" id="ENSBTAT00000018778.3">
    <property type="protein sequence ID" value="ENSBTAP00000018778.2"/>
    <property type="gene ID" value="ENSBTAG00000014130.4"/>
</dbReference>
<dbReference type="GeneID" id="614700"/>
<dbReference type="KEGG" id="bta:614700"/>
<dbReference type="CTD" id="1345"/>
<dbReference type="VEuPathDB" id="HostDB:ENSBTAG00000014130"/>
<dbReference type="eggNOG" id="ENOG502SEI2">
    <property type="taxonomic scope" value="Eukaryota"/>
</dbReference>
<dbReference type="GeneTree" id="ENSGT00940000163089"/>
<dbReference type="HOGENOM" id="CLU_196254_0_0_1"/>
<dbReference type="InParanoid" id="P04038"/>
<dbReference type="OMA" id="FIQGRQN"/>
<dbReference type="OrthoDB" id="10051322at2759"/>
<dbReference type="TreeFam" id="TF353619"/>
<dbReference type="BRENDA" id="7.1.1.9">
    <property type="organism ID" value="908"/>
</dbReference>
<dbReference type="Reactome" id="R-BTA-5628897">
    <property type="pathway name" value="TP53 Regulates Metabolic Genes"/>
</dbReference>
<dbReference type="Reactome" id="R-BTA-611105">
    <property type="pathway name" value="Respiratory electron transport"/>
</dbReference>
<dbReference type="Reactome" id="R-BTA-9707564">
    <property type="pathway name" value="Cytoprotection by HMOX1"/>
</dbReference>
<dbReference type="Reactome" id="R-BTA-9864848">
    <property type="pathway name" value="Complex IV assembly"/>
</dbReference>
<dbReference type="UniPathway" id="UPA00705"/>
<dbReference type="EvolutionaryTrace" id="P04038"/>
<dbReference type="Proteomes" id="UP000009136">
    <property type="component" value="Chromosome 14"/>
</dbReference>
<dbReference type="Bgee" id="ENSBTAG00000014130">
    <property type="expression patterns" value="Expressed in tongue muscle and 104 other cell types or tissues"/>
</dbReference>
<dbReference type="GO" id="GO:0005743">
    <property type="term" value="C:mitochondrial inner membrane"/>
    <property type="evidence" value="ECO:0000318"/>
    <property type="project" value="GO_Central"/>
</dbReference>
<dbReference type="GO" id="GO:0045277">
    <property type="term" value="C:respiratory chain complex IV"/>
    <property type="evidence" value="ECO:0000314"/>
    <property type="project" value="UniProtKB"/>
</dbReference>
<dbReference type="GO" id="GO:0006119">
    <property type="term" value="P:oxidative phosphorylation"/>
    <property type="evidence" value="ECO:0007669"/>
    <property type="project" value="UniProtKB-UniPathway"/>
</dbReference>
<dbReference type="CDD" id="cd22901">
    <property type="entry name" value="CcO_VIc"/>
    <property type="match status" value="1"/>
</dbReference>
<dbReference type="FunFam" id="4.10.93.10:FF:000001">
    <property type="entry name" value="Cytochrome c oxidase subunit 6C"/>
    <property type="match status" value="1"/>
</dbReference>
<dbReference type="Gene3D" id="4.10.93.10">
    <property type="entry name" value="Mitochondrial cytochrome c oxidase subunit VIc/VIIs"/>
    <property type="match status" value="1"/>
</dbReference>
<dbReference type="InterPro" id="IPR051389">
    <property type="entry name" value="Cytochrome_c_oxidase_VIc"/>
</dbReference>
<dbReference type="InterPro" id="IPR034884">
    <property type="entry name" value="Cytochrome_c_oxidase_VIc/VIIs"/>
</dbReference>
<dbReference type="InterPro" id="IPR037169">
    <property type="entry name" value="Cytochrome_c_oxidase_VIc_sf"/>
</dbReference>
<dbReference type="PANTHER" id="PTHR48416">
    <property type="entry name" value="CYTOCHROME C OXIDASE SUBUNIT 6C"/>
    <property type="match status" value="1"/>
</dbReference>
<dbReference type="PANTHER" id="PTHR48416:SF1">
    <property type="entry name" value="CYTOCHROME C OXIDASE SUBUNIT 6C"/>
    <property type="match status" value="1"/>
</dbReference>
<dbReference type="Pfam" id="PF02937">
    <property type="entry name" value="COX6C"/>
    <property type="match status" value="1"/>
</dbReference>
<dbReference type="SUPFAM" id="SSF81415">
    <property type="entry name" value="Mitochondrial cytochrome c oxidase subunit VIc"/>
    <property type="match status" value="1"/>
</dbReference>
<organism>
    <name type="scientific">Bos taurus</name>
    <name type="common">Bovine</name>
    <dbReference type="NCBI Taxonomy" id="9913"/>
    <lineage>
        <taxon>Eukaryota</taxon>
        <taxon>Metazoa</taxon>
        <taxon>Chordata</taxon>
        <taxon>Craniata</taxon>
        <taxon>Vertebrata</taxon>
        <taxon>Euteleostomi</taxon>
        <taxon>Mammalia</taxon>
        <taxon>Eutheria</taxon>
        <taxon>Laurasiatheria</taxon>
        <taxon>Artiodactyla</taxon>
        <taxon>Ruminantia</taxon>
        <taxon>Pecora</taxon>
        <taxon>Bovidae</taxon>
        <taxon>Bovinae</taxon>
        <taxon>Bos</taxon>
    </lineage>
</organism>